<reference key="1">
    <citation type="journal article" date="2005" name="J. Biol. Chem.">
        <title>Identification and characterization of human archaemetzincin-1 and - 2, two novel members of a family of metalloproteases widely distributed in Archaea.</title>
        <authorList>
            <person name="Diaz-Perales A."/>
            <person name="Quesada V."/>
            <person name="Peinado J.R."/>
            <person name="Ugalde A.P."/>
            <person name="Alvarez J."/>
            <person name="Suarez M.F."/>
            <person name="Gomis-Rueth X."/>
            <person name="Lopez-Otin C."/>
        </authorList>
    </citation>
    <scope>RETRACTED PAPER</scope>
    <source>
        <strain>Wistar</strain>
    </source>
</reference>
<reference key="2">
    <citation type="journal article" date="2019" name="J. Biol. Chem.">
        <authorList>
            <person name="Diaz-Perales A."/>
            <person name="Quesada V."/>
            <person name="Peinado J.R."/>
            <person name="Ugalde A.P."/>
            <person name="Alvarez J."/>
            <person name="Suarez M.F."/>
            <person name="Gomis-Rueth F.X."/>
            <person name="Lopez-Otin C."/>
        </authorList>
    </citation>
    <scope>RETRACTION NOTICE OF PUBMED:15972818</scope>
</reference>
<reference key="3">
    <citation type="journal article" date="2004" name="Genome Res.">
        <title>The status, quality, and expansion of the NIH full-length cDNA project: the Mammalian Gene Collection (MGC).</title>
        <authorList>
            <consortium name="The MGC Project Team"/>
        </authorList>
    </citation>
    <scope>NUCLEOTIDE SEQUENCE [LARGE SCALE MRNA]</scope>
    <source>
        <tissue>Heart</tissue>
    </source>
</reference>
<accession>Q400C7</accession>
<accession>Q5U2S2</accession>
<feature type="chain" id="PRO_0000159621" description="Archaemetzincin-2">
    <location>
        <begin position="1"/>
        <end position="359"/>
    </location>
</feature>
<feature type="active site" description="Proton acceptor" evidence="3">
    <location>
        <position position="255"/>
    </location>
</feature>
<feature type="binding site" evidence="1">
    <location>
        <position position="254"/>
    </location>
    <ligand>
        <name>Zn(2+)</name>
        <dbReference type="ChEBI" id="CHEBI:29105"/>
        <label>1</label>
        <note>catalytic</note>
    </ligand>
</feature>
<feature type="binding site" evidence="1">
    <location>
        <position position="258"/>
    </location>
    <ligand>
        <name>Zn(2+)</name>
        <dbReference type="ChEBI" id="CHEBI:29105"/>
        <label>1</label>
        <note>catalytic</note>
    </ligand>
</feature>
<feature type="binding site" evidence="1">
    <location>
        <position position="264"/>
    </location>
    <ligand>
        <name>Zn(2+)</name>
        <dbReference type="ChEBI" id="CHEBI:29105"/>
        <label>1</label>
        <note>catalytic</note>
    </ligand>
</feature>
<feature type="binding site" evidence="1">
    <location>
        <position position="265"/>
    </location>
    <ligand>
        <name>Zn(2+)</name>
        <dbReference type="ChEBI" id="CHEBI:29105"/>
        <label>2</label>
    </ligand>
</feature>
<feature type="binding site" evidence="1">
    <location>
        <position position="270"/>
    </location>
    <ligand>
        <name>Zn(2+)</name>
        <dbReference type="ChEBI" id="CHEBI:29105"/>
        <label>2</label>
    </ligand>
</feature>
<feature type="binding site" evidence="1">
    <location>
        <position position="289"/>
    </location>
    <ligand>
        <name>Zn(2+)</name>
        <dbReference type="ChEBI" id="CHEBI:29105"/>
        <label>2</label>
    </ligand>
</feature>
<feature type="binding site" evidence="1">
    <location>
        <position position="292"/>
    </location>
    <ligand>
        <name>Zn(2+)</name>
        <dbReference type="ChEBI" id="CHEBI:29105"/>
        <label>2</label>
    </ligand>
</feature>
<protein>
    <recommendedName>
        <fullName>Archaemetzincin-2</fullName>
        <ecNumber evidence="2">3.4.-.-</ecNumber>
    </recommendedName>
    <alternativeName>
        <fullName>Archeobacterial metalloproteinase-like protein 2</fullName>
    </alternativeName>
</protein>
<sequence>MQVLRHSEHTLKTALLSKNPDLVSQYEKLDAGEQRLMNEAFQPRNNLFEPITLHSQSDWISSHPEAPQDFEQFFSDRYRKAPCPKKHIIYIQPIGFLGNTRVISEEYIKWLKGYCEAFFYGLKVKFLEPVSVSATKCSFRVNENTQNLQIHTGHILAFLKRNKPEDAFCIVGITMIDLYPRDSWNFVFGQASLSSGVGIFSFARYGKDFYTSKYEGSVKVPQRTVSSDYSIFDNYYIPEITSVLLLRSCKTLTHEIGHILGLRHCQWLACLMQGSNHLEESDRRPLNVCPICLRKLQSAIGFNIVERYKALVKWIDDESCGESGATPKSSSEHVYLPKPVEAFKDWREWILRCIAVLEK</sequence>
<gene>
    <name type="primary">Amz2</name>
</gene>
<evidence type="ECO:0000250" key="1"/>
<evidence type="ECO:0000250" key="2">
    <source>
        <dbReference type="UniProtKB" id="Q8TXW1"/>
    </source>
</evidence>
<evidence type="ECO:0000255" key="3">
    <source>
        <dbReference type="PROSITE-ProRule" id="PRU10095"/>
    </source>
</evidence>
<evidence type="ECO:0000269" key="4">
    <source>
    </source>
</evidence>
<evidence type="ECO:0000305" key="5"/>
<evidence type="ECO:0000305" key="6">
    <source>
    </source>
</evidence>
<organism>
    <name type="scientific">Rattus norvegicus</name>
    <name type="common">Rat</name>
    <dbReference type="NCBI Taxonomy" id="10116"/>
    <lineage>
        <taxon>Eukaryota</taxon>
        <taxon>Metazoa</taxon>
        <taxon>Chordata</taxon>
        <taxon>Craniata</taxon>
        <taxon>Vertebrata</taxon>
        <taxon>Euteleostomi</taxon>
        <taxon>Mammalia</taxon>
        <taxon>Eutheria</taxon>
        <taxon>Euarchontoglires</taxon>
        <taxon>Glires</taxon>
        <taxon>Rodentia</taxon>
        <taxon>Myomorpha</taxon>
        <taxon>Muroidea</taxon>
        <taxon>Muridae</taxon>
        <taxon>Murinae</taxon>
        <taxon>Rattus</taxon>
    </lineage>
</organism>
<proteinExistence type="evidence at transcript level"/>
<dbReference type="EC" id="3.4.-.-" evidence="2"/>
<dbReference type="EMBL" id="AJ879915">
    <property type="protein sequence ID" value="CAI53760.1"/>
    <property type="molecule type" value="mRNA"/>
</dbReference>
<dbReference type="EMBL" id="BC085886">
    <property type="protein sequence ID" value="AAH85886.1"/>
    <property type="molecule type" value="mRNA"/>
</dbReference>
<dbReference type="RefSeq" id="NP_001014143.1">
    <property type="nucleotide sequence ID" value="NM_001014121.1"/>
</dbReference>
<dbReference type="SMR" id="Q400C7"/>
<dbReference type="BioGRID" id="262101">
    <property type="interactions" value="1"/>
</dbReference>
<dbReference type="FunCoup" id="Q400C7">
    <property type="interactions" value="1059"/>
</dbReference>
<dbReference type="IntAct" id="Q400C7">
    <property type="interactions" value="4"/>
</dbReference>
<dbReference type="STRING" id="10116.ENSRNOP00000000263"/>
<dbReference type="MEROPS" id="M54.002"/>
<dbReference type="PhosphoSitePlus" id="Q400C7"/>
<dbReference type="PaxDb" id="10116-ENSRNOP00000000263"/>
<dbReference type="GeneID" id="360650"/>
<dbReference type="KEGG" id="rno:360650"/>
<dbReference type="AGR" id="RGD:1304846"/>
<dbReference type="CTD" id="51321"/>
<dbReference type="RGD" id="1304846">
    <property type="gene designation" value="Amz2"/>
</dbReference>
<dbReference type="VEuPathDB" id="HostDB:ENSRNOG00000000246"/>
<dbReference type="eggNOG" id="ENOG502QVTZ">
    <property type="taxonomic scope" value="Eukaryota"/>
</dbReference>
<dbReference type="HOGENOM" id="CLU_029710_2_1_1"/>
<dbReference type="InParanoid" id="Q400C7"/>
<dbReference type="OrthoDB" id="5012at9989"/>
<dbReference type="PhylomeDB" id="Q400C7"/>
<dbReference type="PRO" id="PR:Q400C7"/>
<dbReference type="Proteomes" id="UP000002494">
    <property type="component" value="Chromosome 10"/>
</dbReference>
<dbReference type="Bgee" id="ENSRNOG00000000246">
    <property type="expression patterns" value="Expressed in testis and 19 other cell types or tissues"/>
</dbReference>
<dbReference type="GO" id="GO:0046872">
    <property type="term" value="F:metal ion binding"/>
    <property type="evidence" value="ECO:0007669"/>
    <property type="project" value="UniProtKB-KW"/>
</dbReference>
<dbReference type="GO" id="GO:0008237">
    <property type="term" value="F:metallopeptidase activity"/>
    <property type="evidence" value="ECO:0007669"/>
    <property type="project" value="UniProtKB-KW"/>
</dbReference>
<dbReference type="GO" id="GO:0006508">
    <property type="term" value="P:proteolysis"/>
    <property type="evidence" value="ECO:0007669"/>
    <property type="project" value="UniProtKB-KW"/>
</dbReference>
<dbReference type="CDD" id="cd11375">
    <property type="entry name" value="Peptidase_M54"/>
    <property type="match status" value="1"/>
</dbReference>
<dbReference type="Gene3D" id="3.40.390.10">
    <property type="entry name" value="Collagenase (Catalytic Domain)"/>
    <property type="match status" value="1"/>
</dbReference>
<dbReference type="InterPro" id="IPR052009">
    <property type="entry name" value="Archaemetzincin"/>
</dbReference>
<dbReference type="InterPro" id="IPR024079">
    <property type="entry name" value="MetalloPept_cat_dom_sf"/>
</dbReference>
<dbReference type="InterPro" id="IPR012962">
    <property type="entry name" value="Pept_M54_archaemetzincn"/>
</dbReference>
<dbReference type="PANTHER" id="PTHR32205:SF5">
    <property type="entry name" value="ARCHAEMETZINCIN-2"/>
    <property type="match status" value="1"/>
</dbReference>
<dbReference type="PANTHER" id="PTHR32205">
    <property type="entry name" value="ARCHAEMETZINCIN-2-RELATED"/>
    <property type="match status" value="1"/>
</dbReference>
<dbReference type="Pfam" id="PF07998">
    <property type="entry name" value="Peptidase_M54"/>
    <property type="match status" value="1"/>
</dbReference>
<dbReference type="SUPFAM" id="SSF55486">
    <property type="entry name" value="Metalloproteases ('zincins'), catalytic domain"/>
    <property type="match status" value="1"/>
</dbReference>
<dbReference type="PROSITE" id="PS00142">
    <property type="entry name" value="ZINC_PROTEASE"/>
    <property type="match status" value="1"/>
</dbReference>
<keyword id="KW-0378">Hydrolase</keyword>
<keyword id="KW-0479">Metal-binding</keyword>
<keyword id="KW-0482">Metalloprotease</keyword>
<keyword id="KW-0645">Protease</keyword>
<keyword id="KW-1185">Reference proteome</keyword>
<keyword id="KW-0862">Zinc</keyword>
<comment type="function">
    <text evidence="2">Probable zinc metalloprotease.</text>
</comment>
<comment type="cofactor">
    <cofactor evidence="2">
        <name>Zn(2+)</name>
        <dbReference type="ChEBI" id="CHEBI:29105"/>
    </cofactor>
    <text evidence="2">Binds 2 Zn(2+) ions per subunit. One is catalytic, whereas the other seems to have a structural role.</text>
</comment>
<comment type="similarity">
    <text evidence="5">Belongs to the peptidase M54 family.</text>
</comment>
<comment type="caution">
    <text evidence="4 6">The protein has been described as presenting a second isoform with a missign Lys in position 309 (PubMed:15972818). However, the paper has been retracted.</text>
</comment>
<name>AMZ2_RAT</name>